<name>UBE2N_PONAB</name>
<comment type="function">
    <text evidence="1">The UBE2V1-UBE2N and UBE2V2-UBE2N heterodimers catalyze the synthesis of non-canonical 'Lys-63'-linked polyubiquitin chains. This type of polyubiquitination does not lead to protein degradation by the proteasome. Mediates transcriptional activation of target genes. Plays a role in the control of progress through the cell cycle and differentiation. Plays a role in the error-free DNA repair pathway and contributes to the survival of cells after DNA damage. Acts together with the E3 ligases, HLTF and SHPRH, in the 'Lys-63'-linked poly-ubiquitination of PCNA upon genotoxic stress, which is required for DNA repair. Appears to act together with E3 ligase RNF5 in the 'Lys-63'-linked polyubiquitination of JKAMP thereby regulating JKAMP function by decreasing its association with components of the proteasome and ERAD. Promotes TRIM5 capsid-specific restriction activity and the UBE2V1-UBE2N heterodimer acts in concert with TRIM5 to generate 'Lys-63'-linked polyubiquitin chains which activate the MAP3K7/TAK1 complex which in turn results in the induction and expression of NF-kappa-B and MAPK-responsive inflammatory genes. Together with RNF135 and UB2V1, catalyzes the viral RNA-dependent 'Lys-63'-linked polyubiquitination of RIGI to activate the downstream signaling pathway that leads to interferon beta production (By similarity). UBE2V1-UBE2N together with TRAF3IP2 E3 ubiquitin ligase mediate 'Lys-63'-linked polyubiquitination of TRAF6, a component of IL17A-mediated signaling pathway.</text>
</comment>
<comment type="catalytic activity">
    <reaction evidence="3 4">
        <text>S-ubiquitinyl-[E1 ubiquitin-activating enzyme]-L-cysteine + [E2 ubiquitin-conjugating enzyme]-L-cysteine = [E1 ubiquitin-activating enzyme]-L-cysteine + S-ubiquitinyl-[E2 ubiquitin-conjugating enzyme]-L-cysteine.</text>
        <dbReference type="EC" id="2.3.2.23"/>
    </reaction>
</comment>
<comment type="activity regulation">
    <text evidence="1 2">Activity is inhibited by binding to OTUB1, which prevents 'Lys-63'-linked polyubiquitination (By similarity). Activity is inhibited by GPS2, leading to prevent 'Lys-63'-linked polyubiquitination (By similarity).</text>
</comment>
<comment type="pathway">
    <text evidence="3">Protein modification; protein ubiquitination.</text>
</comment>
<comment type="subunit">
    <text evidence="1 2">Heterodimer with UBE2V2 (By similarity). Interacts (UBE2V2-UBE2N heterodimer) with the E3 ligase STUB1 (via the U-box domain); the complex has a specific 'Lys-63'-linked polyubiquitination activity (By similarity). Interacts with RNF8 and RNF168 (By similarity). Interacts with RNF11 (By similarity). Interacts with the E3 ligases, HLTF and SHPRH; the interactions promote the 'Lys-63'-linked polyubiquitination of PCNA upon genotoxic stress and lead to DNA repair (By similarity). Interacts with ARIH2 (via RING-type 2) (By similarity). Interacts with OTUB1; leading to inhibit E2-conjugating activity (By similarity). Interacts with GPS2; leading to inhibit E2-conjugating activity (By similarity). Interacts with RIGI and RNF135; involved in RIGI ubiquitination and activation (By similarity).</text>
</comment>
<comment type="PTM">
    <text evidence="1">Conjugation to ISG15 impairs formation of the thioester bond with ubiquitin but not interaction with UBE2V2.</text>
</comment>
<comment type="similarity">
    <text evidence="3">Belongs to the ubiquitin-conjugating enzyme family.</text>
</comment>
<reference key="1">
    <citation type="submission" date="2004-11" db="EMBL/GenBank/DDBJ databases">
        <authorList>
            <consortium name="The German cDNA consortium"/>
        </authorList>
    </citation>
    <scope>NUCLEOTIDE SEQUENCE [LARGE SCALE MRNA]</scope>
    <source>
        <tissue>Brain cortex</tissue>
    </source>
</reference>
<proteinExistence type="evidence at transcript level"/>
<accession>Q5R7J6</accession>
<protein>
    <recommendedName>
        <fullName>Ubiquitin-conjugating enzyme E2 N</fullName>
        <ecNumber>2.3.2.23</ecNumber>
    </recommendedName>
    <alternativeName>
        <fullName>E2 ubiquitin-conjugating enzyme N</fullName>
    </alternativeName>
    <alternativeName>
        <fullName>Ubiquitin carrier protein N</fullName>
    </alternativeName>
    <alternativeName>
        <fullName>Ubiquitin-protein ligase N</fullName>
    </alternativeName>
</protein>
<feature type="chain" id="PRO_0000082505" description="Ubiquitin-conjugating enzyme E2 N">
    <location>
        <begin position="1"/>
        <end position="152"/>
    </location>
</feature>
<feature type="domain" description="UBC core" evidence="3">
    <location>
        <begin position="3"/>
        <end position="149"/>
    </location>
</feature>
<feature type="active site" description="Glycyl thioester intermediate" evidence="3">
    <location>
        <position position="87"/>
    </location>
</feature>
<feature type="modified residue" description="N6-acetyllysine" evidence="1">
    <location>
        <position position="82"/>
    </location>
</feature>
<feature type="cross-link" description="Glycyl lysine isopeptide (Lys-Gly) (interchain with G-Cter in ISG15)" evidence="1">
    <location>
        <position position="92"/>
    </location>
</feature>
<sequence length="152" mass="17138">MAGLPRRIIKETQRLLAEPVPGIKAEPDESNARYFHVVIAGPQDSPFEGGTFKLELFLPEEYPMAAPKVRFMTKIYHPNVDKLGRICLDILKDKWSPALQIRTVLLSIQALLSAPNPDDPLANDVAEQWKTNEAQAIETARAWTRLYAMNNI</sequence>
<keyword id="KW-0007">Acetylation</keyword>
<keyword id="KW-0067">ATP-binding</keyword>
<keyword id="KW-0227">DNA damage</keyword>
<keyword id="KW-0234">DNA repair</keyword>
<keyword id="KW-1017">Isopeptide bond</keyword>
<keyword id="KW-0547">Nucleotide-binding</keyword>
<keyword id="KW-1185">Reference proteome</keyword>
<keyword id="KW-0808">Transferase</keyword>
<keyword id="KW-0832">Ubl conjugation</keyword>
<keyword id="KW-0833">Ubl conjugation pathway</keyword>
<dbReference type="EC" id="2.3.2.23"/>
<dbReference type="EMBL" id="CR860119">
    <property type="protein sequence ID" value="CAH92264.1"/>
    <property type="molecule type" value="mRNA"/>
</dbReference>
<dbReference type="RefSeq" id="NP_001127530.1">
    <property type="nucleotide sequence ID" value="NM_001134058.1"/>
</dbReference>
<dbReference type="BMRB" id="Q5R7J6"/>
<dbReference type="SMR" id="Q5R7J6"/>
<dbReference type="FunCoup" id="Q5R7J6">
    <property type="interactions" value="2977"/>
</dbReference>
<dbReference type="STRING" id="9601.ENSPPYP00000005510"/>
<dbReference type="Ensembl" id="ENSPPYT00000035579.1">
    <property type="protein sequence ID" value="ENSPPYP00000029848.1"/>
    <property type="gene ID" value="ENSPPYG00000035816.1"/>
</dbReference>
<dbReference type="GeneID" id="100174607"/>
<dbReference type="KEGG" id="pon:100174607"/>
<dbReference type="CTD" id="7334"/>
<dbReference type="eggNOG" id="KOG0417">
    <property type="taxonomic scope" value="Eukaryota"/>
</dbReference>
<dbReference type="GeneTree" id="ENSGT00540000070023"/>
<dbReference type="HOGENOM" id="CLU_030988_13_2_1"/>
<dbReference type="InParanoid" id="Q5R7J6"/>
<dbReference type="OrthoDB" id="7851174at2759"/>
<dbReference type="TreeFam" id="TF101126"/>
<dbReference type="UniPathway" id="UPA00143"/>
<dbReference type="Proteomes" id="UP000001595">
    <property type="component" value="Chromosome 12"/>
</dbReference>
<dbReference type="GO" id="GO:0031372">
    <property type="term" value="C:UBC13-MMS2 complex"/>
    <property type="evidence" value="ECO:0000250"/>
    <property type="project" value="UniProtKB"/>
</dbReference>
<dbReference type="GO" id="GO:0000151">
    <property type="term" value="C:ubiquitin ligase complex"/>
    <property type="evidence" value="ECO:0000250"/>
    <property type="project" value="UniProtKB"/>
</dbReference>
<dbReference type="GO" id="GO:0005524">
    <property type="term" value="F:ATP binding"/>
    <property type="evidence" value="ECO:0007669"/>
    <property type="project" value="UniProtKB-KW"/>
</dbReference>
<dbReference type="GO" id="GO:0061631">
    <property type="term" value="F:ubiquitin conjugating enzyme activity"/>
    <property type="evidence" value="ECO:0000250"/>
    <property type="project" value="UniProtKB"/>
</dbReference>
<dbReference type="GO" id="GO:0004842">
    <property type="term" value="F:ubiquitin-protein transferase activity"/>
    <property type="evidence" value="ECO:0000250"/>
    <property type="project" value="UniProtKB"/>
</dbReference>
<dbReference type="GO" id="GO:0006281">
    <property type="term" value="P:DNA repair"/>
    <property type="evidence" value="ECO:0007669"/>
    <property type="project" value="UniProtKB-KW"/>
</dbReference>
<dbReference type="GO" id="GO:0070534">
    <property type="term" value="P:protein K63-linked ubiquitination"/>
    <property type="evidence" value="ECO:0000250"/>
    <property type="project" value="UniProtKB"/>
</dbReference>
<dbReference type="CDD" id="cd23813">
    <property type="entry name" value="UBCc_UBE2N"/>
    <property type="match status" value="1"/>
</dbReference>
<dbReference type="FunFam" id="3.10.110.10:FF:000015">
    <property type="entry name" value="Ubiquitin-conjugating enzyme E2 N"/>
    <property type="match status" value="1"/>
</dbReference>
<dbReference type="Gene3D" id="3.10.110.10">
    <property type="entry name" value="Ubiquitin Conjugating Enzyme"/>
    <property type="match status" value="1"/>
</dbReference>
<dbReference type="InterPro" id="IPR000608">
    <property type="entry name" value="UBQ-conjugat_E2_core"/>
</dbReference>
<dbReference type="InterPro" id="IPR023313">
    <property type="entry name" value="UBQ-conjugating_AS"/>
</dbReference>
<dbReference type="InterPro" id="IPR016135">
    <property type="entry name" value="UBQ-conjugating_enzyme/RWD"/>
</dbReference>
<dbReference type="PANTHER" id="PTHR24068">
    <property type="entry name" value="UBIQUITIN-CONJUGATING ENZYME E2"/>
    <property type="match status" value="1"/>
</dbReference>
<dbReference type="Pfam" id="PF00179">
    <property type="entry name" value="UQ_con"/>
    <property type="match status" value="1"/>
</dbReference>
<dbReference type="SMART" id="SM00212">
    <property type="entry name" value="UBCc"/>
    <property type="match status" value="1"/>
</dbReference>
<dbReference type="SUPFAM" id="SSF54495">
    <property type="entry name" value="UBC-like"/>
    <property type="match status" value="1"/>
</dbReference>
<dbReference type="PROSITE" id="PS00183">
    <property type="entry name" value="UBC_1"/>
    <property type="match status" value="1"/>
</dbReference>
<dbReference type="PROSITE" id="PS50127">
    <property type="entry name" value="UBC_2"/>
    <property type="match status" value="1"/>
</dbReference>
<organism>
    <name type="scientific">Pongo abelii</name>
    <name type="common">Sumatran orangutan</name>
    <name type="synonym">Pongo pygmaeus abelii</name>
    <dbReference type="NCBI Taxonomy" id="9601"/>
    <lineage>
        <taxon>Eukaryota</taxon>
        <taxon>Metazoa</taxon>
        <taxon>Chordata</taxon>
        <taxon>Craniata</taxon>
        <taxon>Vertebrata</taxon>
        <taxon>Euteleostomi</taxon>
        <taxon>Mammalia</taxon>
        <taxon>Eutheria</taxon>
        <taxon>Euarchontoglires</taxon>
        <taxon>Primates</taxon>
        <taxon>Haplorrhini</taxon>
        <taxon>Catarrhini</taxon>
        <taxon>Hominidae</taxon>
        <taxon>Pongo</taxon>
    </lineage>
</organism>
<gene>
    <name type="primary">UBE2N</name>
</gene>
<evidence type="ECO:0000250" key="1">
    <source>
        <dbReference type="UniProtKB" id="P61088"/>
    </source>
</evidence>
<evidence type="ECO:0000250" key="2">
    <source>
        <dbReference type="UniProtKB" id="P61089"/>
    </source>
</evidence>
<evidence type="ECO:0000255" key="3">
    <source>
        <dbReference type="PROSITE-ProRule" id="PRU00388"/>
    </source>
</evidence>
<evidence type="ECO:0000255" key="4">
    <source>
        <dbReference type="PROSITE-ProRule" id="PRU10133"/>
    </source>
</evidence>